<gene>
    <name evidence="21 23" type="primary">FNIP1</name>
    <name evidence="19" type="synonym">KIAA1961</name>
</gene>
<name>FNIP1_HUMAN</name>
<dbReference type="EMBL" id="DQ145719">
    <property type="protein sequence ID" value="AAZ65854.1"/>
    <property type="molecule type" value="mRNA"/>
</dbReference>
<dbReference type="EMBL" id="AC004227">
    <property type="status" value="NOT_ANNOTATED_CDS"/>
    <property type="molecule type" value="Genomic_DNA"/>
</dbReference>
<dbReference type="EMBL" id="AC004622">
    <property type="status" value="NOT_ANNOTATED_CDS"/>
    <property type="molecule type" value="Genomic_DNA"/>
</dbReference>
<dbReference type="EMBL" id="AC005593">
    <property type="status" value="NOT_ANNOTATED_CDS"/>
    <property type="molecule type" value="Genomic_DNA"/>
</dbReference>
<dbReference type="EMBL" id="AC008695">
    <property type="status" value="NOT_ANNOTATED_CDS"/>
    <property type="molecule type" value="Genomic_DNA"/>
</dbReference>
<dbReference type="EMBL" id="AC008497">
    <property type="status" value="NOT_ANNOTATED_CDS"/>
    <property type="molecule type" value="Genomic_DNA"/>
</dbReference>
<dbReference type="EMBL" id="AC026754">
    <property type="status" value="NOT_ANNOTATED_CDS"/>
    <property type="molecule type" value="Genomic_DNA"/>
</dbReference>
<dbReference type="EMBL" id="BC001956">
    <property type="protein sequence ID" value="AAH01956.1"/>
    <property type="molecule type" value="mRNA"/>
</dbReference>
<dbReference type="EMBL" id="AB075841">
    <property type="protein sequence ID" value="BAB85547.1"/>
    <property type="molecule type" value="mRNA"/>
</dbReference>
<dbReference type="EMBL" id="AL832008">
    <property type="protein sequence ID" value="CAD91145.1"/>
    <property type="molecule type" value="mRNA"/>
</dbReference>
<dbReference type="CCDS" id="CCDS34226.1">
    <molecule id="Q8TF40-3"/>
</dbReference>
<dbReference type="CCDS" id="CCDS34227.1">
    <molecule id="Q8TF40-1"/>
</dbReference>
<dbReference type="CCDS" id="CCDS87321.1">
    <molecule id="Q8TF40-2"/>
</dbReference>
<dbReference type="RefSeq" id="NP_001008738.3">
    <molecule id="Q8TF40-3"/>
    <property type="nucleotide sequence ID" value="NM_001008738.3"/>
</dbReference>
<dbReference type="RefSeq" id="NP_001333042.2">
    <molecule id="Q8TF40-2"/>
    <property type="nucleotide sequence ID" value="NM_001346113.2"/>
</dbReference>
<dbReference type="RefSeq" id="NP_588613.3">
    <molecule id="Q8TF40-1"/>
    <property type="nucleotide sequence ID" value="NM_133372.3"/>
</dbReference>
<dbReference type="PDB" id="8JE2">
    <property type="method" value="EM"/>
    <property type="resolution" value="3.63 A"/>
    <property type="chains" value="H=1-1166"/>
</dbReference>
<dbReference type="PDBsum" id="8JE2"/>
<dbReference type="EMDB" id="EMD-36183"/>
<dbReference type="SMR" id="Q8TF40"/>
<dbReference type="BioGRID" id="125175">
    <property type="interactions" value="41"/>
</dbReference>
<dbReference type="ComplexPortal" id="CPX-2624">
    <property type="entry name" value="FLCN-FNIP GTPase-activating complex, FNIP1 variant"/>
</dbReference>
<dbReference type="DIP" id="DIP-57169N"/>
<dbReference type="FunCoup" id="Q8TF40">
    <property type="interactions" value="2411"/>
</dbReference>
<dbReference type="IntAct" id="Q8TF40">
    <property type="interactions" value="17"/>
</dbReference>
<dbReference type="MINT" id="Q8TF40"/>
<dbReference type="STRING" id="9606.ENSP00000421985"/>
<dbReference type="ChEMBL" id="CHEMBL5291519"/>
<dbReference type="GlyCosmos" id="Q8TF40">
    <property type="glycosylation" value="1 site, 1 glycan"/>
</dbReference>
<dbReference type="GlyGen" id="Q8TF40">
    <property type="glycosylation" value="6 sites, 1 O-linked glycan (4 sites)"/>
</dbReference>
<dbReference type="iPTMnet" id="Q8TF40"/>
<dbReference type="PhosphoSitePlus" id="Q8TF40"/>
<dbReference type="BioMuta" id="FNIP1"/>
<dbReference type="DMDM" id="313104236"/>
<dbReference type="jPOST" id="Q8TF40"/>
<dbReference type="MassIVE" id="Q8TF40"/>
<dbReference type="PaxDb" id="9606-ENSP00000421985"/>
<dbReference type="PeptideAtlas" id="Q8TF40"/>
<dbReference type="ProteomicsDB" id="74549">
    <molecule id="Q8TF40-1"/>
</dbReference>
<dbReference type="ProteomicsDB" id="74550">
    <molecule id="Q8TF40-2"/>
</dbReference>
<dbReference type="ProteomicsDB" id="74551">
    <molecule id="Q8TF40-3"/>
</dbReference>
<dbReference type="Pumba" id="Q8TF40"/>
<dbReference type="Antibodypedia" id="25902">
    <property type="antibodies" value="125 antibodies from 25 providers"/>
</dbReference>
<dbReference type="DNASU" id="96459"/>
<dbReference type="Ensembl" id="ENST00000307968.11">
    <molecule id="Q8TF40-3"/>
    <property type="protein sequence ID" value="ENSP00000309266.7"/>
    <property type="gene ID" value="ENSG00000217128.13"/>
</dbReference>
<dbReference type="Ensembl" id="ENST00000510461.6">
    <molecule id="Q8TF40-1"/>
    <property type="protein sequence ID" value="ENSP00000421985.1"/>
    <property type="gene ID" value="ENSG00000217128.13"/>
</dbReference>
<dbReference type="Ensembl" id="ENST00000511848.1">
    <molecule id="Q8TF40-2"/>
    <property type="protein sequence ID" value="ENSP00000425619.1"/>
    <property type="gene ID" value="ENSG00000217128.13"/>
</dbReference>
<dbReference type="GeneID" id="96459"/>
<dbReference type="KEGG" id="hsa:96459"/>
<dbReference type="MANE-Select" id="ENST00000510461.6">
    <property type="protein sequence ID" value="ENSP00000421985.1"/>
    <property type="RefSeq nucleotide sequence ID" value="NM_133372.3"/>
    <property type="RefSeq protein sequence ID" value="NP_588613.3"/>
</dbReference>
<dbReference type="UCSC" id="uc003kvs.2">
    <molecule id="Q8TF40-1"/>
    <property type="organism name" value="human"/>
</dbReference>
<dbReference type="AGR" id="HGNC:29418"/>
<dbReference type="CTD" id="96459"/>
<dbReference type="DisGeNET" id="96459"/>
<dbReference type="GeneCards" id="FNIP1"/>
<dbReference type="HGNC" id="HGNC:29418">
    <property type="gene designation" value="FNIP1"/>
</dbReference>
<dbReference type="HPA" id="ENSG00000217128">
    <property type="expression patterns" value="Low tissue specificity"/>
</dbReference>
<dbReference type="MalaCards" id="FNIP1"/>
<dbReference type="MIM" id="610594">
    <property type="type" value="gene"/>
</dbReference>
<dbReference type="MIM" id="619705">
    <property type="type" value="phenotype"/>
</dbReference>
<dbReference type="neXtProt" id="NX_Q8TF40"/>
<dbReference type="OpenTargets" id="ENSG00000217128"/>
<dbReference type="PharmGKB" id="PA142671758"/>
<dbReference type="VEuPathDB" id="HostDB:ENSG00000217128"/>
<dbReference type="eggNOG" id="KOG3693">
    <property type="taxonomic scope" value="Eukaryota"/>
</dbReference>
<dbReference type="GeneTree" id="ENSGT00390000009391"/>
<dbReference type="HOGENOM" id="CLU_026421_0_0_1"/>
<dbReference type="InParanoid" id="Q8TF40"/>
<dbReference type="OMA" id="AWHSTQQ"/>
<dbReference type="OrthoDB" id="10051712at2759"/>
<dbReference type="PAN-GO" id="Q8TF40">
    <property type="GO annotations" value="3 GO annotations based on evolutionary models"/>
</dbReference>
<dbReference type="PhylomeDB" id="Q8TF40"/>
<dbReference type="TreeFam" id="TF324090"/>
<dbReference type="PathwayCommons" id="Q8TF40"/>
<dbReference type="Reactome" id="R-HSA-9639288">
    <property type="pathway name" value="Amino acids regulate mTORC1"/>
</dbReference>
<dbReference type="SignaLink" id="Q8TF40"/>
<dbReference type="SIGNOR" id="Q8TF40"/>
<dbReference type="BioGRID-ORCS" id="96459">
    <property type="hits" value="29 hits in 1162 CRISPR screens"/>
</dbReference>
<dbReference type="CD-CODE" id="8C2F96ED">
    <property type="entry name" value="Centrosome"/>
</dbReference>
<dbReference type="ChiTaRS" id="FNIP1">
    <property type="organism name" value="human"/>
</dbReference>
<dbReference type="GenomeRNAi" id="96459"/>
<dbReference type="Pharos" id="Q8TF40">
    <property type="development level" value="Tbio"/>
</dbReference>
<dbReference type="PRO" id="PR:Q8TF40"/>
<dbReference type="Proteomes" id="UP000005640">
    <property type="component" value="Chromosome 5"/>
</dbReference>
<dbReference type="RNAct" id="Q8TF40">
    <property type="molecule type" value="protein"/>
</dbReference>
<dbReference type="Bgee" id="ENSG00000217128">
    <property type="expression patterns" value="Expressed in cardiac muscle of right atrium and 199 other cell types or tissues"/>
</dbReference>
<dbReference type="ExpressionAtlas" id="Q8TF40">
    <property type="expression patterns" value="baseline and differential"/>
</dbReference>
<dbReference type="GO" id="GO:0005737">
    <property type="term" value="C:cytoplasm"/>
    <property type="evidence" value="ECO:0000314"/>
    <property type="project" value="UniProtKB"/>
</dbReference>
<dbReference type="GO" id="GO:0005829">
    <property type="term" value="C:cytosol"/>
    <property type="evidence" value="ECO:0000314"/>
    <property type="project" value="UniProtKB"/>
</dbReference>
<dbReference type="GO" id="GO:0005765">
    <property type="term" value="C:lysosomal membrane"/>
    <property type="evidence" value="ECO:0000314"/>
    <property type="project" value="UniProtKB"/>
</dbReference>
<dbReference type="GO" id="GO:0042030">
    <property type="term" value="F:ATPase inhibitor activity"/>
    <property type="evidence" value="ECO:0000314"/>
    <property type="project" value="UniProtKB"/>
</dbReference>
<dbReference type="GO" id="GO:0008047">
    <property type="term" value="F:enzyme activator activity"/>
    <property type="evidence" value="ECO:0000314"/>
    <property type="project" value="UniProt"/>
</dbReference>
<dbReference type="GO" id="GO:0019899">
    <property type="term" value="F:enzyme binding"/>
    <property type="evidence" value="ECO:0000353"/>
    <property type="project" value="UniProtKB"/>
</dbReference>
<dbReference type="GO" id="GO:0046872">
    <property type="term" value="F:metal ion binding"/>
    <property type="evidence" value="ECO:0007669"/>
    <property type="project" value="UniProtKB-KW"/>
</dbReference>
<dbReference type="GO" id="GO:0051087">
    <property type="term" value="F:protein-folding chaperone binding"/>
    <property type="evidence" value="ECO:0000314"/>
    <property type="project" value="UniProtKB"/>
</dbReference>
<dbReference type="GO" id="GO:0001783">
    <property type="term" value="P:B cell apoptotic process"/>
    <property type="evidence" value="ECO:0007669"/>
    <property type="project" value="Ensembl"/>
</dbReference>
<dbReference type="GO" id="GO:0030183">
    <property type="term" value="P:B cell differentiation"/>
    <property type="evidence" value="ECO:0000315"/>
    <property type="project" value="UniProtKB"/>
</dbReference>
<dbReference type="GO" id="GO:0009267">
    <property type="term" value="P:cellular response to starvation"/>
    <property type="evidence" value="ECO:0000250"/>
    <property type="project" value="UniProtKB"/>
</dbReference>
<dbReference type="GO" id="GO:0002327">
    <property type="term" value="P:immature B cell differentiation"/>
    <property type="evidence" value="ECO:0000250"/>
    <property type="project" value="UniProtKB"/>
</dbReference>
<dbReference type="GO" id="GO:0008285">
    <property type="term" value="P:negative regulation of cell population proliferation"/>
    <property type="evidence" value="ECO:0007669"/>
    <property type="project" value="Ensembl"/>
</dbReference>
<dbReference type="GO" id="GO:1905672">
    <property type="term" value="P:negative regulation of lysosome organization"/>
    <property type="evidence" value="ECO:0000314"/>
    <property type="project" value="UniProtKB"/>
</dbReference>
<dbReference type="GO" id="GO:0032007">
    <property type="term" value="P:negative regulation of TOR signaling"/>
    <property type="evidence" value="ECO:0000250"/>
    <property type="project" value="UniProtKB"/>
</dbReference>
<dbReference type="GO" id="GO:0000122">
    <property type="term" value="P:negative regulation of transcription by RNA polymerase II"/>
    <property type="evidence" value="ECO:0000314"/>
    <property type="project" value="UniProtKB"/>
</dbReference>
<dbReference type="GO" id="GO:0002904">
    <property type="term" value="P:positive regulation of B cell apoptotic process"/>
    <property type="evidence" value="ECO:0000250"/>
    <property type="project" value="UniProtKB"/>
</dbReference>
<dbReference type="GO" id="GO:0031334">
    <property type="term" value="P:positive regulation of protein-containing complex assembly"/>
    <property type="evidence" value="ECO:0000314"/>
    <property type="project" value="ParkinsonsUK-UCL"/>
</dbReference>
<dbReference type="GO" id="GO:0032008">
    <property type="term" value="P:positive regulation of TOR signaling"/>
    <property type="evidence" value="ECO:0000314"/>
    <property type="project" value="UniProtKB"/>
</dbReference>
<dbReference type="GO" id="GO:1904263">
    <property type="term" value="P:positive regulation of TORC1 signaling"/>
    <property type="evidence" value="ECO:0000314"/>
    <property type="project" value="UniProtKB"/>
</dbReference>
<dbReference type="GO" id="GO:2000973">
    <property type="term" value="P:regulation of pro-B cell differentiation"/>
    <property type="evidence" value="ECO:0000250"/>
    <property type="project" value="UniProtKB"/>
</dbReference>
<dbReference type="GO" id="GO:0031929">
    <property type="term" value="P:TOR signaling"/>
    <property type="evidence" value="ECO:0007669"/>
    <property type="project" value="Ensembl"/>
</dbReference>
<dbReference type="InterPro" id="IPR037545">
    <property type="entry name" value="DENN_FNIP1/2"/>
</dbReference>
<dbReference type="InterPro" id="IPR028086">
    <property type="entry name" value="FNIP_C_dom"/>
</dbReference>
<dbReference type="InterPro" id="IPR026156">
    <property type="entry name" value="FNIP_fam"/>
</dbReference>
<dbReference type="InterPro" id="IPR028085">
    <property type="entry name" value="FNIP_mid_dom"/>
</dbReference>
<dbReference type="InterPro" id="IPR028084">
    <property type="entry name" value="FNIP_N_dom"/>
</dbReference>
<dbReference type="PANTHER" id="PTHR21634:SF12">
    <property type="entry name" value="FOLLICULIN-INTERACTING PROTEIN 1"/>
    <property type="match status" value="1"/>
</dbReference>
<dbReference type="PANTHER" id="PTHR21634">
    <property type="entry name" value="RE13835P"/>
    <property type="match status" value="1"/>
</dbReference>
<dbReference type="Pfam" id="PF14638">
    <property type="entry name" value="FNIP_C"/>
    <property type="match status" value="1"/>
</dbReference>
<dbReference type="Pfam" id="PF14637">
    <property type="entry name" value="FNIP_M"/>
    <property type="match status" value="1"/>
</dbReference>
<dbReference type="Pfam" id="PF14636">
    <property type="entry name" value="FNIP_N"/>
    <property type="match status" value="1"/>
</dbReference>
<dbReference type="PRINTS" id="PR02073">
    <property type="entry name" value="FOLLICULNIP1"/>
</dbReference>
<dbReference type="PROSITE" id="PS51836">
    <property type="entry name" value="DENN_FNIP12"/>
    <property type="match status" value="1"/>
</dbReference>
<accession>Q8TF40</accession>
<accession>D6RJH5</accession>
<accession>Q86T47</accession>
<accession>Q9BUT0</accession>
<feature type="chain" id="PRO_0000308484" description="Folliculin-interacting protein 1">
    <location>
        <begin position="1"/>
        <end position="1166"/>
    </location>
</feature>
<feature type="domain" description="uDENN FNIP1/2-type" evidence="3">
    <location>
        <begin position="37"/>
        <end position="478"/>
    </location>
</feature>
<feature type="domain" description="cDENN FNIP1/2-type" evidence="3">
    <location>
        <begin position="486"/>
        <end position="1092"/>
    </location>
</feature>
<feature type="domain" description="dDENN FNIP1/2-type" evidence="3">
    <location>
        <begin position="1102"/>
        <end position="1157"/>
    </location>
</feature>
<feature type="region of interest" description="KY-finger" evidence="1">
    <location>
        <begin position="611"/>
        <end position="612"/>
    </location>
</feature>
<feature type="region of interest" description="Disordered" evidence="4">
    <location>
        <begin position="781"/>
        <end position="817"/>
    </location>
</feature>
<feature type="region of interest" description="Disordered" evidence="4">
    <location>
        <begin position="912"/>
        <end position="956"/>
    </location>
</feature>
<feature type="region of interest" description="Interaction with HSP90AA1" evidence="13">
    <location>
        <begin position="929"/>
        <end position="1166"/>
    </location>
</feature>
<feature type="short sequence motif" description="Cys degron" evidence="1">
    <location>
        <begin position="608"/>
        <end position="615"/>
    </location>
</feature>
<feature type="compositionally biased region" description="Basic and acidic residues" evidence="4">
    <location>
        <begin position="783"/>
        <end position="805"/>
    </location>
</feature>
<feature type="compositionally biased region" description="Basic and acidic residues" evidence="4">
    <location>
        <begin position="915"/>
        <end position="925"/>
    </location>
</feature>
<feature type="binding site" evidence="1">
    <location>
        <position position="608"/>
    </location>
    <ligand>
        <name>Zn(2+)</name>
        <dbReference type="ChEBI" id="CHEBI:29105"/>
        <label>1</label>
        <note>ligand shared with FEM1B</note>
    </ligand>
</feature>
<feature type="binding site" evidence="1">
    <location>
        <position position="610"/>
    </location>
    <ligand>
        <name>Zn(2+)</name>
        <dbReference type="ChEBI" id="CHEBI:29105"/>
        <label>2</label>
        <note>ligand shared with FEM1B</note>
    </ligand>
</feature>
<feature type="binding site" evidence="1">
    <location>
        <position position="613"/>
    </location>
    <ligand>
        <name>Zn(2+)</name>
        <dbReference type="ChEBI" id="CHEBI:29105"/>
        <label>1</label>
        <note>ligand shared with FEM1B</note>
    </ligand>
</feature>
<feature type="binding site" evidence="1">
    <location>
        <position position="613"/>
    </location>
    <ligand>
        <name>Zn(2+)</name>
        <dbReference type="ChEBI" id="CHEBI:29105"/>
        <label>2</label>
        <note>ligand shared with FEM1B</note>
    </ligand>
</feature>
<feature type="binding site" evidence="1">
    <location>
        <position position="615"/>
    </location>
    <ligand>
        <name>Zn(2+)</name>
        <dbReference type="ChEBI" id="CHEBI:29105"/>
        <label>1</label>
        <note>ligand shared with FEM1B</note>
    </ligand>
</feature>
<feature type="modified residue" description="Phosphoserine; by AMPK" evidence="18 27 28">
    <location>
        <position position="220"/>
    </location>
</feature>
<feature type="modified residue" description="Phosphoserine; by AMPK" evidence="18">
    <location>
        <position position="230"/>
    </location>
</feature>
<feature type="modified residue" description="Phosphoserine; by AMPK" evidence="18">
    <location>
        <position position="232"/>
    </location>
</feature>
<feature type="modified residue" description="Phosphoserine; by AMPK" evidence="18">
    <location>
        <position position="261"/>
    </location>
</feature>
<feature type="modified residue" description="Phosphothreonine" evidence="27">
    <location>
        <position position="294"/>
    </location>
</feature>
<feature type="modified residue" description="Phosphoserine" evidence="27">
    <location>
        <position position="296"/>
    </location>
</feature>
<feature type="modified residue" description="Phosphoserine; by AMPK" evidence="18 24">
    <location>
        <position position="593"/>
    </location>
</feature>
<feature type="modified residue" description="Phosphoserine" evidence="24">
    <location>
        <position position="594"/>
    </location>
</feature>
<feature type="modified residue" description="Phosphoserine" evidence="24 25 26">
    <location>
        <position position="760"/>
    </location>
</feature>
<feature type="modified residue" description="Phosphoserine" evidence="24 25 26">
    <location>
        <position position="763"/>
    </location>
</feature>
<feature type="modified residue" description="Phosphoserine; alternate; by CK2" evidence="15">
    <location>
        <position position="938"/>
    </location>
</feature>
<feature type="modified residue" description="Phosphoserine; by CK2" evidence="15">
    <location>
        <position position="939"/>
    </location>
</feature>
<feature type="modified residue" description="Phosphoserine; by CK2" evidence="15">
    <location>
        <position position="941"/>
    </location>
</feature>
<feature type="modified residue" description="Phosphoserine; by CK2" evidence="15">
    <location>
        <position position="946"/>
    </location>
</feature>
<feature type="modified residue" description="Phosphoserine; by CK2" evidence="15">
    <location>
        <position position="948"/>
    </location>
</feature>
<feature type="glycosylation site" description="O-linked (GlcNAc) serine; alternate" evidence="15">
    <location>
        <position position="938"/>
    </location>
</feature>
<feature type="cross-link" description="Glycyl lysine isopeptide (Lys-Gly) (interchain with G-Cter in ubiquitin)" evidence="15">
    <location>
        <position position="1119"/>
    </location>
</feature>
<feature type="splice variant" id="VSP_028984" description="In isoform 3." evidence="19">
    <location>
        <begin position="208"/>
        <end position="235"/>
    </location>
</feature>
<feature type="splice variant" id="VSP_028982" description="In isoform 2." evidence="20">
    <original>D</original>
    <variation>M</variation>
    <location>
        <position position="508"/>
    </location>
</feature>
<feature type="splice variant" id="VSP_028983" description="In isoform 2." evidence="20">
    <location>
        <begin position="509"/>
        <end position="1166"/>
    </location>
</feature>
<feature type="sequence variant" id="VAR_036824" description="In dbSNP:rs7730228." evidence="6 7">
    <original>G</original>
    <variation>C</variation>
    <location>
        <position position="76"/>
    </location>
</feature>
<feature type="sequence variant" id="VAR_086807" description="In IMD93; undetectable protein in homozygous patient cells." evidence="17">
    <location>
        <begin position="290"/>
        <end position="1166"/>
    </location>
</feature>
<feature type="sequence variant" id="VAR_036825" description="In dbSNP:rs13177318.">
    <original>S</original>
    <variation>L</variation>
    <location>
        <position position="354"/>
    </location>
</feature>
<feature type="sequence variant" id="VAR_036826" description="In dbSNP:rs26008." evidence="5 7 8">
    <original>Q</original>
    <variation>R</variation>
    <location>
        <position position="648"/>
    </location>
</feature>
<feature type="sequence variant" id="VAR_036827" description="In dbSNP:rs12109782.">
    <original>V</original>
    <variation>L</variation>
    <location>
        <position position="738"/>
    </location>
</feature>
<feature type="sequence variant" id="VAR_036828" description="In dbSNP:rs7717874.">
    <original>I</original>
    <variation>V</variation>
    <location>
        <position position="844"/>
    </location>
</feature>
<feature type="sequence variant" id="VAR_086808" description="In IMD93; uncertain significance; dbSNP:rs2149501551." evidence="16">
    <original>S</original>
    <variation>N</variation>
    <location>
        <position position="1118"/>
    </location>
</feature>
<feature type="mutagenesis site" description="In SA5 mutant; Abolishes phosphorylation by AMPK, leading to activation of the non-canonical mTORC1 signaling; when associated with 230-A--A-232, A-261 and A-593." evidence="18">
    <original>S</original>
    <variation>A</variation>
    <location>
        <position position="220"/>
    </location>
</feature>
<feature type="mutagenesis site" description="In SA5 mutant; Abolishes phosphorylation by AMPK, leading to activation of the non-canonical mTORC1 signaling; when associated with A-220, A-261 and A-593." evidence="18">
    <original>SAS</original>
    <variation>AAA</variation>
    <location>
        <begin position="230"/>
        <end position="232"/>
    </location>
</feature>
<feature type="mutagenesis site" description="In SA5 mutant; Abolishes phosphorylation by AMPK, leading to activation of the non-canonical mTORC1 signaling; when associated with A-220, 230-A--A-232 and A-593." evidence="18">
    <original>S</original>
    <variation>A</variation>
    <location>
        <position position="261"/>
    </location>
</feature>
<feature type="mutagenesis site" description="In SA5 mutant; Abolishes phosphorylation by AMPK, leading to activation of the non-canonical mTORC1 signaling; when associated with A-220, 230-A--A-232 and A-261." evidence="18">
    <original>S</original>
    <variation>A</variation>
    <location>
        <position position="593"/>
    </location>
</feature>
<feature type="mutagenesis site" description="Mimics phosphorylation status; leading to inhibit ATPase activity of HSP90AA1/Hsp90." evidence="15">
    <original>SSDSALGDSES</original>
    <variation>EDEALGDEEE</variation>
    <location>
        <begin position="938"/>
        <end position="948"/>
    </location>
</feature>
<feature type="mutagenesis site" description="Impaired phosphorylation by CK2 and interaction with HSP90AA1/Hsp90." evidence="15">
    <original>S</original>
    <variation>A</variation>
    <location>
        <position position="938"/>
    </location>
</feature>
<feature type="mutagenesis site" description="No effect on ubiquitination and protein stability." evidence="15">
    <original>K</original>
    <variation>R</variation>
    <location>
        <position position="982"/>
    </location>
</feature>
<feature type="mutagenesis site" description="No effect on ubiquitination and protein stability." evidence="15">
    <original>K</original>
    <variation>R</variation>
    <location>
        <position position="1117"/>
    </location>
</feature>
<feature type="mutagenesis site" description="Impaired ubiquitination, leading to increased stability." evidence="15">
    <original>K</original>
    <variation>R</variation>
    <location>
        <position position="1119"/>
    </location>
</feature>
<feature type="mutagenesis site" description="No effect on ubiquitination and protein stability." evidence="15">
    <original>K</original>
    <variation>R</variation>
    <location>
        <position position="1134"/>
    </location>
</feature>
<keyword id="KW-0002">3D-structure</keyword>
<keyword id="KW-0025">Alternative splicing</keyword>
<keyword id="KW-0122">Cardiomyopathy</keyword>
<keyword id="KW-0963">Cytoplasm</keyword>
<keyword id="KW-0225">Disease variant</keyword>
<keyword id="KW-0325">Glycoprotein</keyword>
<keyword id="KW-1017">Isopeptide bond</keyword>
<keyword id="KW-0458">Lysosome</keyword>
<keyword id="KW-0472">Membrane</keyword>
<keyword id="KW-0479">Metal-binding</keyword>
<keyword id="KW-0558">Oxidation</keyword>
<keyword id="KW-0597">Phosphoprotein</keyword>
<keyword id="KW-1267">Proteomics identification</keyword>
<keyword id="KW-1185">Reference proteome</keyword>
<keyword id="KW-0832">Ubl conjugation</keyword>
<keyword id="KW-0862">Zinc</keyword>
<evidence type="ECO:0000250" key="1">
    <source>
        <dbReference type="UniProtKB" id="Q68FD7"/>
    </source>
</evidence>
<evidence type="ECO:0000250" key="2">
    <source>
        <dbReference type="UniProtKB" id="Q9P278"/>
    </source>
</evidence>
<evidence type="ECO:0000255" key="3">
    <source>
        <dbReference type="PROSITE-ProRule" id="PRU01180"/>
    </source>
</evidence>
<evidence type="ECO:0000256" key="4">
    <source>
        <dbReference type="SAM" id="MobiDB-lite"/>
    </source>
</evidence>
<evidence type="ECO:0000269" key="5">
    <source>
    </source>
</evidence>
<evidence type="ECO:0000269" key="6">
    <source>
    </source>
</evidence>
<evidence type="ECO:0000269" key="7">
    <source>
    </source>
</evidence>
<evidence type="ECO:0000269" key="8">
    <source>
    </source>
</evidence>
<evidence type="ECO:0000269" key="9">
    <source>
    </source>
</evidence>
<evidence type="ECO:0000269" key="10">
    <source>
    </source>
</evidence>
<evidence type="ECO:0000269" key="11">
    <source>
    </source>
</evidence>
<evidence type="ECO:0000269" key="12">
    <source>
    </source>
</evidence>
<evidence type="ECO:0000269" key="13">
    <source>
    </source>
</evidence>
<evidence type="ECO:0000269" key="14">
    <source>
    </source>
</evidence>
<evidence type="ECO:0000269" key="15">
    <source>
    </source>
</evidence>
<evidence type="ECO:0000269" key="16">
    <source>
    </source>
</evidence>
<evidence type="ECO:0000269" key="17">
    <source>
    </source>
</evidence>
<evidence type="ECO:0000269" key="18">
    <source>
    </source>
</evidence>
<evidence type="ECO:0000303" key="19">
    <source>
    </source>
</evidence>
<evidence type="ECO:0000303" key="20">
    <source>
    </source>
</evidence>
<evidence type="ECO:0000303" key="21">
    <source>
    </source>
</evidence>
<evidence type="ECO:0000305" key="22"/>
<evidence type="ECO:0000312" key="23">
    <source>
        <dbReference type="HGNC" id="HGNC:29418"/>
    </source>
</evidence>
<evidence type="ECO:0007744" key="24">
    <source>
    </source>
</evidence>
<evidence type="ECO:0007744" key="25">
    <source>
    </source>
</evidence>
<evidence type="ECO:0007744" key="26">
    <source>
    </source>
</evidence>
<evidence type="ECO:0007744" key="27">
    <source>
    </source>
</evidence>
<evidence type="ECO:0007744" key="28">
    <source>
    </source>
</evidence>
<reference key="1">
    <citation type="journal article" date="2006" name="Proc. Natl. Acad. Sci. U.S.A.">
        <title>Folliculin encoded by the BHD gene interacts with a binding protein, FNIP1, and AMPK, and is involved in AMPK and mTOR signaling.</title>
        <authorList>
            <person name="Baba M."/>
            <person name="Hong S.-B."/>
            <person name="Sharma N."/>
            <person name="Warren M.B."/>
            <person name="Nickerson M.L."/>
            <person name="Iwamatsu A."/>
            <person name="Esposito D."/>
            <person name="Gillette W.K."/>
            <person name="Hopkins R.F. III"/>
            <person name="Hartley J.L."/>
            <person name="Furihata M."/>
            <person name="Oishi S."/>
            <person name="Zhen W."/>
            <person name="Burke T.R. Jr."/>
            <person name="Linehan W.M."/>
            <person name="Schmidt L.S."/>
            <person name="Zbar B."/>
        </authorList>
    </citation>
    <scope>NUCLEOTIDE SEQUENCE [MRNA]</scope>
    <scope>FUNCTION</scope>
    <scope>INTERACTION WITH FLCN; HSPCA; PRKAA1; PRKAB1 AND PRKAG1</scope>
    <scope>PHOSPHORYLATION</scope>
    <scope>TISSUE SPECIFICITY</scope>
    <scope>IDENTIFICATION BY MASS SPECTROMETRY</scope>
    <scope>VARIANTS CYS-76 AND ARG-648</scope>
</reference>
<reference key="2">
    <citation type="journal article" date="2004" name="Nature">
        <title>The DNA sequence and comparative analysis of human chromosome 5.</title>
        <authorList>
            <person name="Schmutz J."/>
            <person name="Martin J."/>
            <person name="Terry A."/>
            <person name="Couronne O."/>
            <person name="Grimwood J."/>
            <person name="Lowry S."/>
            <person name="Gordon L.A."/>
            <person name="Scott D."/>
            <person name="Xie G."/>
            <person name="Huang W."/>
            <person name="Hellsten U."/>
            <person name="Tran-Gyamfi M."/>
            <person name="She X."/>
            <person name="Prabhakar S."/>
            <person name="Aerts A."/>
            <person name="Altherr M."/>
            <person name="Bajorek E."/>
            <person name="Black S."/>
            <person name="Branscomb E."/>
            <person name="Caoile C."/>
            <person name="Challacombe J.F."/>
            <person name="Chan Y.M."/>
            <person name="Denys M."/>
            <person name="Detter J.C."/>
            <person name="Escobar J."/>
            <person name="Flowers D."/>
            <person name="Fotopulos D."/>
            <person name="Glavina T."/>
            <person name="Gomez M."/>
            <person name="Gonzales E."/>
            <person name="Goodstein D."/>
            <person name="Grigoriev I."/>
            <person name="Groza M."/>
            <person name="Hammon N."/>
            <person name="Hawkins T."/>
            <person name="Haydu L."/>
            <person name="Israni S."/>
            <person name="Jett J."/>
            <person name="Kadner K."/>
            <person name="Kimball H."/>
            <person name="Kobayashi A."/>
            <person name="Lopez F."/>
            <person name="Lou Y."/>
            <person name="Martinez D."/>
            <person name="Medina C."/>
            <person name="Morgan J."/>
            <person name="Nandkeshwar R."/>
            <person name="Noonan J.P."/>
            <person name="Pitluck S."/>
            <person name="Pollard M."/>
            <person name="Predki P."/>
            <person name="Priest J."/>
            <person name="Ramirez L."/>
            <person name="Retterer J."/>
            <person name="Rodriguez A."/>
            <person name="Rogers S."/>
            <person name="Salamov A."/>
            <person name="Salazar A."/>
            <person name="Thayer N."/>
            <person name="Tice H."/>
            <person name="Tsai M."/>
            <person name="Ustaszewska A."/>
            <person name="Vo N."/>
            <person name="Wheeler J."/>
            <person name="Wu K."/>
            <person name="Yang J."/>
            <person name="Dickson M."/>
            <person name="Cheng J.-F."/>
            <person name="Eichler E.E."/>
            <person name="Olsen A."/>
            <person name="Pennacchio L.A."/>
            <person name="Rokhsar D.S."/>
            <person name="Richardson P."/>
            <person name="Lucas S.M."/>
            <person name="Myers R.M."/>
            <person name="Rubin E.M."/>
        </authorList>
    </citation>
    <scope>NUCLEOTIDE SEQUENCE [LARGE SCALE GENOMIC DNA]</scope>
</reference>
<reference key="3">
    <citation type="journal article" date="2004" name="Genome Res.">
        <title>The status, quality, and expansion of the NIH full-length cDNA project: the Mammalian Gene Collection (MGC).</title>
        <authorList>
            <consortium name="The MGC Project Team"/>
        </authorList>
    </citation>
    <scope>NUCLEOTIDE SEQUENCE [LARGE SCALE MRNA] (ISOFORM 2)</scope>
    <scope>VARIANT CYS-76</scope>
    <source>
        <tissue>Lung</tissue>
    </source>
</reference>
<reference key="4">
    <citation type="journal article" date="2001" name="DNA Res.">
        <title>Prediction of the coding sequences of unidentified human genes. XXII. The complete sequences of 50 new cDNA clones which code for large proteins.</title>
        <authorList>
            <person name="Nagase T."/>
            <person name="Kikuno R."/>
            <person name="Ohara O."/>
        </authorList>
    </citation>
    <scope>NUCLEOTIDE SEQUENCE [LARGE SCALE MRNA] OF 196-1166 (ISOFORM 3)</scope>
    <scope>VARIANT ARG-648</scope>
    <source>
        <tissue>Brain</tissue>
    </source>
</reference>
<reference key="5">
    <citation type="journal article" date="2007" name="BMC Genomics">
        <title>The full-ORF clone resource of the German cDNA consortium.</title>
        <authorList>
            <person name="Bechtel S."/>
            <person name="Rosenfelder H."/>
            <person name="Duda A."/>
            <person name="Schmidt C.P."/>
            <person name="Ernst U."/>
            <person name="Wellenreuther R."/>
            <person name="Mehrle A."/>
            <person name="Schuster C."/>
            <person name="Bahr A."/>
            <person name="Bloecker H."/>
            <person name="Heubner D."/>
            <person name="Hoerlein A."/>
            <person name="Michel G."/>
            <person name="Wedler H."/>
            <person name="Koehrer K."/>
            <person name="Ottenwaelder B."/>
            <person name="Poustka A."/>
            <person name="Wiemann S."/>
            <person name="Schupp I."/>
        </authorList>
    </citation>
    <scope>NUCLEOTIDE SEQUENCE [LARGE SCALE MRNA] OF 617-1166</scope>
    <scope>VARIANT ARG-648</scope>
    <source>
        <tissue>Skeletal muscle</tissue>
    </source>
</reference>
<reference key="6">
    <citation type="journal article" date="2008" name="Gene">
        <title>Identification and characterization of a novel folliculin-interacting protein FNIP2.</title>
        <authorList>
            <person name="Hasumi H."/>
            <person name="Baba M."/>
            <person name="Hong S.-B."/>
            <person name="Hasumi Y."/>
            <person name="Huang Y."/>
            <person name="Yao M."/>
            <person name="Valera V.A."/>
            <person name="Linehan W.M."/>
            <person name="Schmidt L.S."/>
        </authorList>
    </citation>
    <scope>SUBUNIT</scope>
    <scope>TISSUE SPECIFICITY</scope>
</reference>
<reference key="7">
    <citation type="journal article" date="2008" name="Oncogene">
        <title>Interaction of folliculin (Birt-Hogg-Dube gene product) with a novel Fnip1-like (FnipL/Fnip2) protein.</title>
        <authorList>
            <person name="Takagi Y."/>
            <person name="Kobayashi T."/>
            <person name="Shiono M."/>
            <person name="Wang L."/>
            <person name="Piao X."/>
            <person name="Sun G."/>
            <person name="Zhang D."/>
            <person name="Abe M."/>
            <person name="Hagiwara Y."/>
            <person name="Takahashi K."/>
            <person name="Hino O."/>
        </authorList>
    </citation>
    <scope>FUNCTION</scope>
    <scope>SUBCELLULAR LOCATION</scope>
</reference>
<reference key="8">
    <citation type="journal article" date="2008" name="Proc. Natl. Acad. Sci. U.S.A.">
        <title>A quantitative atlas of mitotic phosphorylation.</title>
        <authorList>
            <person name="Dephoure N."/>
            <person name="Zhou C."/>
            <person name="Villen J."/>
            <person name="Beausoleil S.A."/>
            <person name="Bakalarski C.E."/>
            <person name="Elledge S.J."/>
            <person name="Gygi S.P."/>
        </authorList>
    </citation>
    <scope>PHOSPHORYLATION [LARGE SCALE ANALYSIS] AT SER-593; SER-594; SER-760 AND SER-763</scope>
    <scope>IDENTIFICATION BY MASS SPECTROMETRY [LARGE SCALE ANALYSIS]</scope>
    <source>
        <tissue>Cervix carcinoma</tissue>
    </source>
</reference>
<reference key="9">
    <citation type="journal article" date="2009" name="Sci. Signal.">
        <title>Quantitative phosphoproteomic analysis of T cell receptor signaling reveals system-wide modulation of protein-protein interactions.</title>
        <authorList>
            <person name="Mayya V."/>
            <person name="Lundgren D.H."/>
            <person name="Hwang S.-I."/>
            <person name="Rezaul K."/>
            <person name="Wu L."/>
            <person name="Eng J.K."/>
            <person name="Rodionov V."/>
            <person name="Han D.K."/>
        </authorList>
    </citation>
    <scope>PHOSPHORYLATION [LARGE SCALE ANALYSIS] AT SER-760 AND SER-763</scope>
    <scope>IDENTIFICATION BY MASS SPECTROMETRY [LARGE SCALE ANALYSIS]</scope>
    <source>
        <tissue>Leukemic T-cell</tissue>
    </source>
</reference>
<reference key="10">
    <citation type="journal article" date="2010" name="Sci. Signal.">
        <title>Quantitative phosphoproteomics reveals widespread full phosphorylation site occupancy during mitosis.</title>
        <authorList>
            <person name="Olsen J.V."/>
            <person name="Vermeulen M."/>
            <person name="Santamaria A."/>
            <person name="Kumar C."/>
            <person name="Miller M.L."/>
            <person name="Jensen L.J."/>
            <person name="Gnad F."/>
            <person name="Cox J."/>
            <person name="Jensen T.S."/>
            <person name="Nigg E.A."/>
            <person name="Brunak S."/>
            <person name="Mann M."/>
        </authorList>
    </citation>
    <scope>PHOSPHORYLATION [LARGE SCALE ANALYSIS] AT SER-760 AND SER-763</scope>
    <scope>IDENTIFICATION BY MASS SPECTROMETRY [LARGE SCALE ANALYSIS]</scope>
    <source>
        <tissue>Cervix carcinoma</tissue>
    </source>
</reference>
<reference key="11">
    <citation type="journal article" date="2013" name="J. Cell Biol.">
        <title>Recruitment of folliculin to lysosomes supports the amino acid-dependent activation of Rag GTPases.</title>
        <authorList>
            <person name="Petit C.S."/>
            <person name="Roczniak-Ferguson A."/>
            <person name="Ferguson S.M."/>
        </authorList>
    </citation>
    <scope>FUNCTION</scope>
    <scope>SUBCELLULAR LOCATION</scope>
</reference>
<reference key="12">
    <citation type="journal article" date="2013" name="J. Proteome Res.">
        <title>Toward a comprehensive characterization of a human cancer cell phosphoproteome.</title>
        <authorList>
            <person name="Zhou H."/>
            <person name="Di Palma S."/>
            <person name="Preisinger C."/>
            <person name="Peng M."/>
            <person name="Polat A.N."/>
            <person name="Heck A.J."/>
            <person name="Mohammed S."/>
        </authorList>
    </citation>
    <scope>PHOSPHORYLATION [LARGE SCALE ANALYSIS] AT SER-220; THR-294 AND SER-296</scope>
    <scope>IDENTIFICATION BY MASS SPECTROMETRY [LARGE SCALE ANALYSIS]</scope>
    <source>
        <tissue>Cervix carcinoma</tissue>
        <tissue>Erythroleukemia</tissue>
    </source>
</reference>
<reference key="13">
    <citation type="journal article" date="2014" name="Autophagy">
        <title>FLCN, a novel autophagy component, interacts with GABARAP and is regulated by ULK1 phosphorylation.</title>
        <authorList>
            <person name="Dunlop E.A."/>
            <person name="Seifan S."/>
            <person name="Claessens T."/>
            <person name="Behrends C."/>
            <person name="Kamps M.A."/>
            <person name="Rozycka E."/>
            <person name="Kemp A.J."/>
            <person name="Nookala R.K."/>
            <person name="Blenis J."/>
            <person name="Coull B.J."/>
            <person name="Murray J.T."/>
            <person name="van Steensel M.A."/>
            <person name="Wilkinson S."/>
            <person name="Tee A.R."/>
        </authorList>
    </citation>
    <scope>FUNCTION</scope>
</reference>
<reference key="14">
    <citation type="journal article" date="2014" name="J. Proteomics">
        <title>An enzyme assisted RP-RPLC approach for in-depth analysis of human liver phosphoproteome.</title>
        <authorList>
            <person name="Bian Y."/>
            <person name="Song C."/>
            <person name="Cheng K."/>
            <person name="Dong M."/>
            <person name="Wang F."/>
            <person name="Huang J."/>
            <person name="Sun D."/>
            <person name="Wang L."/>
            <person name="Ye M."/>
            <person name="Zou H."/>
        </authorList>
    </citation>
    <scope>PHOSPHORYLATION [LARGE SCALE ANALYSIS] AT SER-220</scope>
    <scope>IDENTIFICATION BY MASS SPECTROMETRY [LARGE SCALE ANALYSIS]</scope>
    <source>
        <tissue>Liver</tissue>
    </source>
</reference>
<reference key="15">
    <citation type="journal article" date="2016" name="Nat. Commun.">
        <title>The FNIP co-chaperones decelerate the Hsp90 chaperone cycle and enhance drug binding.</title>
        <authorList>
            <person name="Woodford M.R."/>
            <person name="Dunn D.M."/>
            <person name="Blanden A.R."/>
            <person name="Capriotti D."/>
            <person name="Loiselle D."/>
            <person name="Prodromou C."/>
            <person name="Panaretou B."/>
            <person name="Hughes P.F."/>
            <person name="Smith A."/>
            <person name="Ackerman W."/>
            <person name="Haystead T.A."/>
            <person name="Loh S.N."/>
            <person name="Bourboulia D."/>
            <person name="Schmidt L.S."/>
            <person name="Marston Linehan W."/>
            <person name="Bratslavsky G."/>
            <person name="Mollapour M."/>
        </authorList>
    </citation>
    <scope>FUNCTION</scope>
    <scope>SUBUNIT</scope>
    <scope>INTERACTION WITH HSP70; HSP90AA1; FLCN; STIP1; PTGES3; CDC37; BRAF; GCR AND CDK4</scope>
    <scope>TISSUE SPECIFICITY</scope>
</reference>
<reference key="16">
    <citation type="journal article" date="2018" name="J. Cell Biol.">
        <title>GATOR1-dependent recruitment of FLCN-FNIP to lysosomes coordinates Rag GTPase heterodimer nucleotide status in response to amino acids.</title>
        <authorList>
            <person name="Meng J."/>
            <person name="Ferguson S.M."/>
        </authorList>
    </citation>
    <scope>SUBCELLULAR LOCATION</scope>
</reference>
<reference key="17">
    <citation type="journal article" date="2019" name="Cell Rep.">
        <title>Post-translational regulation of FNIP1 creates a rheostat for the molecular chaperone Hsp90.</title>
        <authorList>
            <person name="Sager R.A."/>
            <person name="Woodford M.R."/>
            <person name="Backe S.J."/>
            <person name="Makedon A.M."/>
            <person name="Baker-Williams A.J."/>
            <person name="DiGregorio B.T."/>
            <person name="Loiselle D.R."/>
            <person name="Haystead T.A."/>
            <person name="Zachara N.E."/>
            <person name="Prodromou C."/>
            <person name="Bourboulia D."/>
            <person name="Schmidt L.S."/>
            <person name="Linehan W.M."/>
            <person name="Bratslavsky G."/>
            <person name="Mollapour M."/>
        </authorList>
    </citation>
    <scope>FUNCTION</scope>
    <scope>INTERACTION WITH HSP90AA1</scope>
    <scope>PHOSPHORYLATION AT SER-938; SER-939; SER-941; SER-946 AND SER-948</scope>
    <scope>GLYCOSYLATION AT SER-938</scope>
    <scope>UBIQUITINATION AT LYS-1119</scope>
    <scope>MUTAGENESIS OF 938-SER--SER-948; SER-938; LYS-982; LYS-1117; LYS-1119 AND LYS-1134</scope>
</reference>
<reference key="18">
    <citation type="journal article" date="2023" name="Science">
        <title>Induction of lysosomal and mitochondrial biogenesis by AMPK phosphorylation of FNIP1.</title>
        <authorList>
            <person name="Malik N."/>
            <person name="Ferreira B.I."/>
            <person name="Hollstein P.E."/>
            <person name="Curtis S.D."/>
            <person name="Trefts E."/>
            <person name="Weiser Novak S."/>
            <person name="Yu J."/>
            <person name="Gilson R."/>
            <person name="Hellberg K."/>
            <person name="Fang L."/>
            <person name="Sheridan A."/>
            <person name="Hah N."/>
            <person name="Shadel G.S."/>
            <person name="Manor U."/>
            <person name="Shaw R.J."/>
        </authorList>
    </citation>
    <scope>FUNCTION</scope>
    <scope>PHOSPHORYLATION AT SER-220; SER-230; SER-232; SER-261 AND SER-593</scope>
    <scope>MUTAGENESIS OF SER-220; 230-SER--SER-232; SER-261 AND SER-593</scope>
</reference>
<reference key="19">
    <citation type="journal article" date="2020" name="Eur. J. Immunol.">
        <title>Mutations of the gene FNIP1 associated with a syndromic autosomal recessive immunodeficiency with cardiomyopathy and pre-excitation syndrome.</title>
        <authorList>
            <person name="Niehues T."/>
            <person name="Oezguer T.T."/>
            <person name="Bickes M."/>
            <person name="Waldmann R."/>
            <person name="Schoening J."/>
            <person name="Braesen J."/>
            <person name="Hagel C."/>
            <person name="Ballmaier M."/>
            <person name="Klusmann J.H."/>
            <person name="Niedermayer A."/>
            <person name="Pannicke U."/>
            <person name="Enders A."/>
            <person name="Dueckers G."/>
            <person name="Siepermann K."/>
            <person name="Hempel J."/>
            <person name="Schwarz K."/>
            <person name="Viemann D."/>
        </authorList>
    </citation>
    <scope>VARIANT IMD93 ASN-1118</scope>
    <scope>TISSUE SPECIFICITY</scope>
    <scope>INVOLVEMENT IN IMD93</scope>
</reference>
<reference key="20">
    <citation type="journal article" date="2021" name="Blood">
        <title>Absent B cells, agammaglobulinemia, and hypertrophic cardiomyopathy in folliculin-interacting protein 1 deficiency.</title>
        <authorList>
            <person name="Saettini F."/>
            <person name="Poli C."/>
            <person name="Vengoechea J."/>
            <person name="Bonanomi S."/>
            <person name="Orellana J.C."/>
            <person name="Fazio G."/>
            <person name="Rodriguez F.H."/>
            <person name="Noguera L.P."/>
            <person name="Booth C."/>
            <person name="Jarur-Chamy V."/>
            <person name="Shams M."/>
            <person name="Iascone M."/>
            <person name="Vukic M."/>
            <person name="Gasperini S."/>
            <person name="Quadri M."/>
            <person name="Barroeta Seijas A."/>
            <person name="Rivers E."/>
            <person name="Mauri M."/>
            <person name="Badolato R."/>
            <person name="Cazzaniga G."/>
            <person name="Bugarin C."/>
            <person name="Gaipa G."/>
            <person name="Kroes W.G.M."/>
            <person name="Moratto D."/>
            <person name="van Oostaijen-Ten Dam M.M."/>
            <person name="Baas F."/>
            <person name="van der Maarel S."/>
            <person name="Piazza R."/>
            <person name="Coban-Akdemir Z.H."/>
            <person name="Lupski J.R."/>
            <person name="Yuan B."/>
            <person name="Chinn I.K."/>
            <person name="Daxinger L."/>
            <person name="Biondi A."/>
        </authorList>
    </citation>
    <scope>VARIANT IMD93 290-ARG--LEU-1166 DEL</scope>
    <scope>INVOLVEMENT IN IMD93</scope>
    <scope>FUNCTION</scope>
</reference>
<organism>
    <name type="scientific">Homo sapiens</name>
    <name type="common">Human</name>
    <dbReference type="NCBI Taxonomy" id="9606"/>
    <lineage>
        <taxon>Eukaryota</taxon>
        <taxon>Metazoa</taxon>
        <taxon>Chordata</taxon>
        <taxon>Craniata</taxon>
        <taxon>Vertebrata</taxon>
        <taxon>Euteleostomi</taxon>
        <taxon>Mammalia</taxon>
        <taxon>Eutheria</taxon>
        <taxon>Euarchontoglires</taxon>
        <taxon>Primates</taxon>
        <taxon>Haplorrhini</taxon>
        <taxon>Catarrhini</taxon>
        <taxon>Hominidae</taxon>
        <taxon>Homo</taxon>
    </lineage>
</organism>
<comment type="function">
    <text evidence="1 2 7 10 11 12 13 15 17 18">Binding partner of the GTPase-activating protein FLCN: involved in the cellular response to amino acid availability by regulating the non-canonical mTORC1 signaling cascade controlling the MiT/TFE factors TFEB and TFE3 (PubMed:17028174, PubMed:18663353, PubMed:24081491, PubMed:37079666). Required to promote FLCN recruitment to lysosomes and interaction with Rag GTPases, leading to activation of the non-canonical mTORC1 signaling (PubMed:24081491). In low-amino acid conditions, component of the lysosomal folliculin complex (LFC) on the membrane of lysosomes, which inhibits the GTPase-activating activity of FLCN, thereby inactivating mTORC1 and promoting nuclear translocation of TFEB and TFE3 (By similarity). Upon amino acid restimulation, disassembly of the LFC complex liberates the GTPase-activating activity of FLCN, leading to activation of mTORC1 and subsequent inactivation of TFEB and TFE3 (PubMed:37079666). Together with FLCN, regulates autophagy: following phosphorylation by ULK1, interacts with GABARAP and promotes autophagy (PubMed:25126726). In addition to its role in mTORC1 signaling, also acts as a co-chaperone of HSP90AA1/Hsp90: following gradual phosphorylation by CK2, inhibits the ATPase activity of HSP90AA1/Hsp90, leading to activate both kinase and non-kinase client proteins of HSP90AA1/Hsp90 (PubMed:27353360, PubMed:30699359). Acts as a scaffold to load client protein FLCN onto HSP90AA1/Hsp90 (PubMed:27353360). Competes with the activating co-chaperone AHSA1 for binding to HSP90AA1, thereby providing a reciprocal regulatory mechanism for chaperoning of client proteins (PubMed:27353360). Also acts as a core component of the reductive stress response by inhibiting activation of mitochondria in normal conditions: in response to reductive stress, the conserved Cys degron is reduced, leading to recognition and polyubiquitylation by the CRL2(FEM1B) complex, followed by proteasomal (By similarity). Required for B-cell development (PubMed:32905580).</text>
</comment>
<comment type="subunit">
    <text evidence="1 2 7 9 13 15">Homodimer and homomultimer (PubMed:18403135, PubMed:27353360). Heterodimer and heteromultimer with FNIP2 (PubMed:18403135, PubMed:27353360). Interacts with FLCN (via C-terminus) (PubMed:17028174, PubMed:27353360). Component of the lysosomal folliculin complex (LFC), composed of FLCN, FNIP1 (or FNIP2), RagA/RRAGA or RagB/RRAGB GDP-bound, RagC/RRAGC or RagD/RRAGD GTP-bound, and Ragulator (By similarity). Interacts with HSPCA and with the PRKAA1, PRKAB1 and PRKAG1 subunits of 5'-AMP-activated protein kinase (AMPK) (PubMed:17028174). Phosphorylated FLCN and AMPK are preferentially bound (PubMed:17028174). Interacts with HSP70, STIP1, PTGES3, CDC37, BRAF, GCR and CDK4 (PubMed:27353360). Interacts with HSP90AA1; the interaction inhibits HSP90AA1 ATPase activity (PubMed:27353360, PubMed:30699359). Interacts with ATP2A2 (By similarity).</text>
</comment>
<comment type="interaction">
    <interactant intactId="EBI-2946919">
        <id>Q8TF40</id>
    </interactant>
    <interactant intactId="EBI-2970160">
        <id>Q8NFG4</id>
        <label>FLCN</label>
    </interactant>
    <organismsDiffer>false</organismsDiffer>
    <experiments>5</experiments>
</comment>
<comment type="interaction">
    <interactant intactId="EBI-2946919">
        <id>Q8TF40</id>
    </interactant>
    <interactant intactId="EBI-7597109">
        <id>Q9P278</id>
        <label>FNIP2</label>
    </interactant>
    <organismsDiffer>false</organismsDiffer>
    <experiments>7</experiments>
</comment>
<comment type="interaction">
    <interactant intactId="EBI-2946919">
        <id>Q8TF40</id>
    </interactant>
    <interactant intactId="EBI-712001">
        <id>O95166</id>
        <label>GABARAP</label>
    </interactant>
    <organismsDiffer>false</organismsDiffer>
    <experiments>5</experiments>
</comment>
<comment type="interaction">
    <interactant intactId="EBI-2946919">
        <id>Q8TF40</id>
    </interactant>
    <interactant intactId="EBI-746969">
        <id>Q9H0R8</id>
        <label>GABARAPL1</label>
    </interactant>
    <organismsDiffer>false</organismsDiffer>
    <experiments>2</experiments>
</comment>
<comment type="interaction">
    <interactant intactId="EBI-2946919">
        <id>Q8TF40</id>
    </interactant>
    <interactant intactId="EBI-6248094">
        <id>Q9Q2G4</id>
        <label>ORF</label>
    </interactant>
    <organismsDiffer>true</organismsDiffer>
    <experiments>3</experiments>
</comment>
<comment type="interaction">
    <interactant intactId="EBI-15604805">
        <id>Q8TF40-1</id>
    </interactant>
    <interactant intactId="EBI-15604776">
        <id>Q8NFG4-1</id>
        <label>FLCN</label>
    </interactant>
    <organismsDiffer>false</organismsDiffer>
    <experiments>7</experiments>
</comment>
<comment type="subcellular location">
    <subcellularLocation>
        <location evidence="14">Lysosome membrane</location>
    </subcellularLocation>
    <subcellularLocation>
        <location evidence="10 14">Cytoplasm</location>
        <location evidence="10 14">Cytosol</location>
    </subcellularLocation>
    <text evidence="10 14">Localizes to lysosome membrane in amino acid-depleted conditions and relocalizes to the cytosol upon refeeding (PubMed:29848618). Colocalizes with FLCN in the cytoplasm (PubMed:18663353).</text>
</comment>
<comment type="alternative products">
    <event type="alternative splicing"/>
    <isoform>
        <id>Q8TF40-1</id>
        <name>1</name>
        <sequence type="displayed"/>
    </isoform>
    <isoform>
        <id>Q8TF40-2</id>
        <name>2</name>
        <sequence type="described" ref="VSP_028982 VSP_028983"/>
    </isoform>
    <isoform>
        <id>Q8TF40-3</id>
        <name>3</name>
        <sequence type="described" ref="VSP_028984"/>
    </isoform>
</comment>
<comment type="tissue specificity">
    <text evidence="7 9 13 16">Strong expression is found in the heart, liver placenta, muscle, nasal mucosa, salivary gland and uvula and moderate expression in kidney and lung. Higher levels detected in clear cell renal cell carcinoma (RCC) and chromophobe RCC than in normal kidney tissue. Expressed in peripheral blood mononuclear cells (PubMed:32181500).</text>
</comment>
<comment type="domain">
    <text evidence="1">The KY-finger orients the Cys degron for ubiquitination by the CRL2(FEM1B) complex.</text>
</comment>
<comment type="PTM">
    <text evidence="7 15 18">Phosphorylated by AMPK in response to energetic stress (PubMed:17028174, PubMed:37079666). Phosphorylation by AMPK in response to mitochondrial damage promotes inactivation of the non-canonical mTORC1 signaling, nuclear translocation of TFEB and TFE3, inducing transcription of lysosomal or autophagy genes (PubMed:37079666). Sequential phosphorylation by CK2 promotes its gradual interaction with HSP90AA1/Hsp90 (PubMed:30699359). Priming phosphorylation at Ser-938 is followed by relay phosphorylation at Ser-939, Ser-941, Ser-946 and Ser-948, promoting its gradual interaction with HSP90AA1/Hsp90 (PubMed:30699359). This leads to incremental inhibition of HSP90AA1/Hsp90 ATPase activity and gradual activation of both kinase and non-kinase clients (PubMed:30699359). Dephosphorylated by protein phosphatase 5 (PP5), promoting glycosylation by OGT (PubMed:30699359).</text>
</comment>
<comment type="PTM">
    <text evidence="15">GlcNAcylation at Ser-938 by OGT following dephosphorylation by protein phosphatase 5 (PP5) promotes ubiquitination and degradation by the proteasome.</text>
</comment>
<comment type="PTM">
    <text evidence="1 15">Ubiquitinated through 'Lys-11' linkage of ubiquitin moieties at Lys-1119 following glycosylation by OGT, leading to its degradation by the proteasome (PubMed:30699359). Ubiquitinated by the CRL2(FEM1B) complex in response to reductive stress: reductive stress causes reduction of the conserved Cys degron in FNIP1, followed by zinc-binding, zinc acting as a molecular glue for recognition by the CRL2(FEM1B) complex (By similarity). Ubiquitination leads to FNIP1 degradation, and activation of mitochondria to recalibrate reactive oxygen species (ROS) (By similarity).</text>
</comment>
<comment type="PTM">
    <text evidence="1">Oxidation of the Cys degron in normal conditions promotes its stabilization by preventing recognition and ubiquitination by the CRL2(FEM1B) complex.</text>
</comment>
<comment type="disease" evidence="16 17">
    <disease id="DI-06317">
        <name>Immunodeficiency 93 and hypertrophic cardiomyopathy</name>
        <acronym>IMD93</acronym>
        <description>An autosomal recessive disorder characterized by onset of recurrent viral and bacterial infections, particularly with encapsulated bacteria, and hypertrophic cardiomyopathy in the first months or years of life.</description>
        <dbReference type="MIM" id="619705"/>
    </disease>
    <text>The disease is caused by variants affecting the gene represented in this entry.</text>
</comment>
<comment type="similarity">
    <text evidence="22">Belongs to the FNIP family.</text>
</comment>
<comment type="online information" name="Atlas of Genetics and Cytogenetics in Oncology and Haematology">
    <link uri="https://atlasgeneticsoncology.org/gene/44003/FNIP1"/>
</comment>
<proteinExistence type="evidence at protein level"/>
<sequence length="1166" mass="130555">MAPTLFQKLFSKRTGLGAPGRDARDPDCGFSWPLPEFDPSQIRLIVYQDCERRGRNVLFDSSVKRRNEDISVSKLGSDAQVKVFGKCCQLKPGGDSSSSLDSSVTSSSDIKDQCLKYQGSRCSSDANMLGEMMFGSVAMSYKGSTLKIHQIRSPPQLMLSKVFTARTGSSICGSLNTLQDSLEFINQDNNTLKADNNTVINGLLGNIGLSQFCSPRRAFSEQGPLRLIRSASFFAVHSNPMDMPGRELNEDRDSGIARSASLSSLLITPFPSPNSSLTRSCASSYQRRWRRSQTTSLENGVFPRWSIEESFNLSDESCGPNPGIVRKKKIAIGVIFSLSKDEDENNKFNEFFFSHFPLFESHMNKLKSAIEQAMKMSRRSADASQRSLAYNRIVDALNEFRTTICNLYTMPRIGEPVWLTMMSGTPEKNHLCYRFMKEFTFLMENASKNQFLPALITAVLTNHLAWVPTVMPNGQPPIKIFLEKHSSQSVDMLAKTHPYNPLWAQLGDLYGAIGSPVRLARTVVVGKRQDMVQRLLYFLTYFIRCSELQETHLLENGEDEAIVMPGTVITTTLEKGEIEESEYVLVTMHRNKSSLLFKESEEIRTPNCNCKYCSHPLLGQNVENISQQEREDIQNSSKELLGISDECQMISPSDCQEENAVDVKQYRDKLRTCFDAKLETVVCTGSVPVDKCALSESGLESTEETWQSEKLLDSDSHTGKAMRSTGMVVEKKPPDKIVPASFSCEAAQTKVTFLIGDSMSPDSDTELRSQAVVDQITRHHTKPLKEERGAIDQHQETKQTTKDQSGESDTQNMVSEEPCELPCWNHSDPESMSLFDEYFNDDSIETRTIDDVPFKTSTDSKDHCCMLEFSKILCTKNNKQNNEFCKCIETVPQDSCKTCFPQQDQRDTLSILVPHGDKESSDKKIAVGTEWDIPRNESSDSALGDSESEDTGHDMTRQVSSYYGGEQEDWAEEDEIPFPGSKLIEVSAVQPNIANFGRSLLGGYCSSYVPDFVLQGIGSDERFRQCLMSDLSHAVQHPVLDEPIAEAVCIIADMDKWTVQVASSQRRVTDNKLGKEVLVSSLVSNLLHSTLQLYKHNLSPNFCVMHLEDRLQELYFKSKMLSEYLRGQMRVHVKELGVVLGIESSDLPLLAAVASTHSPYVAQILL</sequence>
<protein>
    <recommendedName>
        <fullName evidence="21">Folliculin-interacting protein 1</fullName>
    </recommendedName>
</protein>